<organism>
    <name type="scientific">Arabidopsis lyrata subsp. lyrata</name>
    <name type="common">Lyre-leaved rock-cress</name>
    <dbReference type="NCBI Taxonomy" id="81972"/>
    <lineage>
        <taxon>Eukaryota</taxon>
        <taxon>Viridiplantae</taxon>
        <taxon>Streptophyta</taxon>
        <taxon>Embryophyta</taxon>
        <taxon>Tracheophyta</taxon>
        <taxon>Spermatophyta</taxon>
        <taxon>Magnoliopsida</taxon>
        <taxon>eudicotyledons</taxon>
        <taxon>Gunneridae</taxon>
        <taxon>Pentapetalae</taxon>
        <taxon>rosids</taxon>
        <taxon>malvids</taxon>
        <taxon>Brassicales</taxon>
        <taxon>Brassicaceae</taxon>
        <taxon>Camelineae</taxon>
        <taxon>Arabidopsis</taxon>
    </lineage>
</organism>
<accession>D7LIK3</accession>
<proteinExistence type="inferred from homology"/>
<evidence type="ECO:0000250" key="1"/>
<evidence type="ECO:0000255" key="2"/>
<evidence type="ECO:0000305" key="3"/>
<keyword id="KW-1003">Cell membrane</keyword>
<keyword id="KW-0472">Membrane</keyword>
<keyword id="KW-1185">Reference proteome</keyword>
<keyword id="KW-0812">Transmembrane</keyword>
<keyword id="KW-1133">Transmembrane helix</keyword>
<gene>
    <name type="ORF">ARALYDRAFT_482547</name>
</gene>
<feature type="chain" id="PRO_0000412002" description="CASP-like protein 2B2">
    <location>
        <begin position="1"/>
        <end position="201"/>
    </location>
</feature>
<feature type="topological domain" description="Cytoplasmic" evidence="2">
    <location>
        <begin position="1"/>
        <end position="28"/>
    </location>
</feature>
<feature type="transmembrane region" description="Helical" evidence="2">
    <location>
        <begin position="29"/>
        <end position="49"/>
    </location>
</feature>
<feature type="topological domain" description="Extracellular" evidence="2">
    <location>
        <begin position="50"/>
        <end position="71"/>
    </location>
</feature>
<feature type="transmembrane region" description="Helical" evidence="2">
    <location>
        <begin position="72"/>
        <end position="92"/>
    </location>
</feature>
<feature type="topological domain" description="Cytoplasmic" evidence="2">
    <location>
        <begin position="93"/>
        <end position="108"/>
    </location>
</feature>
<feature type="transmembrane region" description="Helical" evidence="2">
    <location>
        <begin position="109"/>
        <end position="129"/>
    </location>
</feature>
<feature type="topological domain" description="Extracellular" evidence="2">
    <location>
        <begin position="130"/>
        <end position="166"/>
    </location>
</feature>
<feature type="transmembrane region" description="Helical" evidence="2">
    <location>
        <begin position="167"/>
        <end position="187"/>
    </location>
</feature>
<feature type="topological domain" description="Cytoplasmic" evidence="2">
    <location>
        <begin position="188"/>
        <end position="201"/>
    </location>
</feature>
<dbReference type="EMBL" id="GL348716">
    <property type="protein sequence ID" value="EFH55831.1"/>
    <property type="molecule type" value="Genomic_DNA"/>
</dbReference>
<dbReference type="RefSeq" id="XP_002879572.1">
    <property type="nucleotide sequence ID" value="XM_002879526.1"/>
</dbReference>
<dbReference type="SMR" id="D7LIK3"/>
<dbReference type="STRING" id="81972.D7LIK3"/>
<dbReference type="EnsemblPlants" id="fgenesh2_kg.4__1607__AT2G35760.1">
    <property type="protein sequence ID" value="fgenesh2_kg.4__1607__AT2G35760.1"/>
    <property type="gene ID" value="fgenesh2_kg.4__1607__AT2G35760.1"/>
</dbReference>
<dbReference type="Gramene" id="fgenesh2_kg.4__1607__AT2G35760.1">
    <property type="protein sequence ID" value="fgenesh2_kg.4__1607__AT2G35760.1"/>
    <property type="gene ID" value="fgenesh2_kg.4__1607__AT2G35760.1"/>
</dbReference>
<dbReference type="eggNOG" id="ENOG502QQH2">
    <property type="taxonomic scope" value="Eukaryota"/>
</dbReference>
<dbReference type="HOGENOM" id="CLU_066104_0_1_1"/>
<dbReference type="OrthoDB" id="689701at2759"/>
<dbReference type="Proteomes" id="UP000008694">
    <property type="component" value="Unassembled WGS sequence"/>
</dbReference>
<dbReference type="GO" id="GO:0005886">
    <property type="term" value="C:plasma membrane"/>
    <property type="evidence" value="ECO:0007669"/>
    <property type="project" value="UniProtKB-SubCell"/>
</dbReference>
<dbReference type="InterPro" id="IPR006459">
    <property type="entry name" value="CASP/CASPL"/>
</dbReference>
<dbReference type="InterPro" id="IPR006702">
    <property type="entry name" value="CASP_dom"/>
</dbReference>
<dbReference type="NCBIfam" id="TIGR01569">
    <property type="entry name" value="A_tha_TIGR01569"/>
    <property type="match status" value="1"/>
</dbReference>
<dbReference type="PANTHER" id="PTHR33573:SF64">
    <property type="entry name" value="CASP-LIKE PROTEIN 2B1"/>
    <property type="match status" value="1"/>
</dbReference>
<dbReference type="PANTHER" id="PTHR33573">
    <property type="entry name" value="CASP-LIKE PROTEIN 4A4"/>
    <property type="match status" value="1"/>
</dbReference>
<dbReference type="Pfam" id="PF04535">
    <property type="entry name" value="CASP_dom"/>
    <property type="match status" value="1"/>
</dbReference>
<protein>
    <recommendedName>
        <fullName>CASP-like protein 2B2</fullName>
        <shortName>AlCASPL2B2</shortName>
    </recommendedName>
</protein>
<name>CSPL3_ARALL</name>
<sequence length="201" mass="21407">MSYLGVGVSPGNVTGSSTKMKLIDRKVRVTELILRSLVCAFALVAAILVATDVQVREIFTIQKKAKFTDMKALVFLVVINGIAAGYSLVQAVCCLVGLMKGSVLLSEPLAWAIFFGDQAVAYLCVAGVAAAAQSAAFAKLGQPELQWMKICDMYGKFCNQVGEGIASALFACIGMVLISCISAFGVFRLYGGSKPRQSSRW</sequence>
<reference key="1">
    <citation type="journal article" date="2011" name="Nat. Genet.">
        <title>The Arabidopsis lyrata genome sequence and the basis of rapid genome size change.</title>
        <authorList>
            <person name="Hu T.T."/>
            <person name="Pattyn P."/>
            <person name="Bakker E.G."/>
            <person name="Cao J."/>
            <person name="Cheng J.-F."/>
            <person name="Clark R.M."/>
            <person name="Fahlgren N."/>
            <person name="Fawcett J.A."/>
            <person name="Grimwood J."/>
            <person name="Gundlach H."/>
            <person name="Haberer G."/>
            <person name="Hollister J.D."/>
            <person name="Ossowski S."/>
            <person name="Ottilar R.P."/>
            <person name="Salamov A.A."/>
            <person name="Schneeberger K."/>
            <person name="Spannagl M."/>
            <person name="Wang X."/>
            <person name="Yang L."/>
            <person name="Nasrallah M.E."/>
            <person name="Bergelson J."/>
            <person name="Carrington J.C."/>
            <person name="Gaut B.S."/>
            <person name="Schmutz J."/>
            <person name="Mayer K.F.X."/>
            <person name="Van de Peer Y."/>
            <person name="Grigoriev I.V."/>
            <person name="Nordborg M."/>
            <person name="Weigel D."/>
            <person name="Guo Y.-L."/>
        </authorList>
    </citation>
    <scope>NUCLEOTIDE SEQUENCE [LARGE SCALE GENOMIC DNA]</scope>
    <source>
        <strain>cv. MN47</strain>
    </source>
</reference>
<reference key="2">
    <citation type="journal article" date="2014" name="Plant Physiol.">
        <title>Functional and evolutionary analysis of the CASPARIAN STRIP MEMBRANE DOMAIN PROTEIN family.</title>
        <authorList>
            <person name="Roppolo D."/>
            <person name="Boeckmann B."/>
            <person name="Pfister A."/>
            <person name="Boutet E."/>
            <person name="Rubio M.C."/>
            <person name="Denervaud-Tendon V."/>
            <person name="Vermeer J.E."/>
            <person name="Gheyselinck J."/>
            <person name="Xenarios I."/>
            <person name="Geldner N."/>
        </authorList>
    </citation>
    <scope>GENE FAMILY</scope>
    <scope>NOMENCLATURE</scope>
</reference>
<comment type="subunit">
    <text evidence="1">Homodimer and heterodimers.</text>
</comment>
<comment type="subcellular location">
    <subcellularLocation>
        <location evidence="1">Cell membrane</location>
        <topology evidence="1">Multi-pass membrane protein</topology>
    </subcellularLocation>
</comment>
<comment type="similarity">
    <text evidence="3">Belongs to the Casparian strip membrane proteins (CASP) family.</text>
</comment>